<feature type="chain" id="PRO_1000165722" description="Large ribosomal subunit protein uL2">
    <location>
        <begin position="1"/>
        <end position="276"/>
    </location>
</feature>
<feature type="region of interest" description="Disordered" evidence="2">
    <location>
        <begin position="1"/>
        <end position="20"/>
    </location>
</feature>
<feature type="region of interest" description="Disordered" evidence="2">
    <location>
        <begin position="219"/>
        <end position="276"/>
    </location>
</feature>
<feature type="compositionally biased region" description="Polar residues" evidence="2">
    <location>
        <begin position="7"/>
        <end position="20"/>
    </location>
</feature>
<sequence length="276" mass="30224">MGIKKYNPTTNGRRNMTTNDFAEITTDRPEKSLLAPLSKKAGRNNQGKITVRHQGGGHKRQYRIIDFKRNEDGIPGRVATIEYDPNRSANIALINYVDGEKRYILAPKNLEVGMEIMSGAEADIKIGNALPLINIPVGTVVHNIELKPGRGGQLVRSAGTSAQVLGKEGKYVLVRLTSGEVRLVLSACRAAVGQVGNESHELIKIGKAGRSRWLGKRPTVRGSVMNPVDHPHGGGEGRSPIGRKSPMSPWGKPTLGFKTRKKNKASDKFIVRRRKK</sequence>
<dbReference type="EMBL" id="CP000227">
    <property type="protein sequence ID" value="ACM10641.1"/>
    <property type="molecule type" value="Genomic_DNA"/>
</dbReference>
<dbReference type="SMR" id="B9IZJ7"/>
<dbReference type="KEGG" id="bcq:BCQ_0126"/>
<dbReference type="HOGENOM" id="CLU_036235_2_1_9"/>
<dbReference type="Proteomes" id="UP000000441">
    <property type="component" value="Chromosome"/>
</dbReference>
<dbReference type="GO" id="GO:0015934">
    <property type="term" value="C:large ribosomal subunit"/>
    <property type="evidence" value="ECO:0007669"/>
    <property type="project" value="InterPro"/>
</dbReference>
<dbReference type="GO" id="GO:0019843">
    <property type="term" value="F:rRNA binding"/>
    <property type="evidence" value="ECO:0007669"/>
    <property type="project" value="UniProtKB-UniRule"/>
</dbReference>
<dbReference type="GO" id="GO:0003735">
    <property type="term" value="F:structural constituent of ribosome"/>
    <property type="evidence" value="ECO:0007669"/>
    <property type="project" value="InterPro"/>
</dbReference>
<dbReference type="GO" id="GO:0016740">
    <property type="term" value="F:transferase activity"/>
    <property type="evidence" value="ECO:0007669"/>
    <property type="project" value="InterPro"/>
</dbReference>
<dbReference type="GO" id="GO:0002181">
    <property type="term" value="P:cytoplasmic translation"/>
    <property type="evidence" value="ECO:0007669"/>
    <property type="project" value="TreeGrafter"/>
</dbReference>
<dbReference type="FunFam" id="2.30.30.30:FF:000001">
    <property type="entry name" value="50S ribosomal protein L2"/>
    <property type="match status" value="1"/>
</dbReference>
<dbReference type="FunFam" id="2.40.50.140:FF:000003">
    <property type="entry name" value="50S ribosomal protein L2"/>
    <property type="match status" value="1"/>
</dbReference>
<dbReference type="FunFam" id="4.10.950.10:FF:000001">
    <property type="entry name" value="50S ribosomal protein L2"/>
    <property type="match status" value="1"/>
</dbReference>
<dbReference type="Gene3D" id="2.30.30.30">
    <property type="match status" value="1"/>
</dbReference>
<dbReference type="Gene3D" id="2.40.50.140">
    <property type="entry name" value="Nucleic acid-binding proteins"/>
    <property type="match status" value="1"/>
</dbReference>
<dbReference type="Gene3D" id="4.10.950.10">
    <property type="entry name" value="Ribosomal protein L2, domain 3"/>
    <property type="match status" value="1"/>
</dbReference>
<dbReference type="HAMAP" id="MF_01320_B">
    <property type="entry name" value="Ribosomal_uL2_B"/>
    <property type="match status" value="1"/>
</dbReference>
<dbReference type="InterPro" id="IPR012340">
    <property type="entry name" value="NA-bd_OB-fold"/>
</dbReference>
<dbReference type="InterPro" id="IPR014722">
    <property type="entry name" value="Rib_uL2_dom2"/>
</dbReference>
<dbReference type="InterPro" id="IPR002171">
    <property type="entry name" value="Ribosomal_uL2"/>
</dbReference>
<dbReference type="InterPro" id="IPR005880">
    <property type="entry name" value="Ribosomal_uL2_bac/org-type"/>
</dbReference>
<dbReference type="InterPro" id="IPR022669">
    <property type="entry name" value="Ribosomal_uL2_C"/>
</dbReference>
<dbReference type="InterPro" id="IPR022671">
    <property type="entry name" value="Ribosomal_uL2_CS"/>
</dbReference>
<dbReference type="InterPro" id="IPR014726">
    <property type="entry name" value="Ribosomal_uL2_dom3"/>
</dbReference>
<dbReference type="InterPro" id="IPR022666">
    <property type="entry name" value="Ribosomal_uL2_RNA-bd_dom"/>
</dbReference>
<dbReference type="InterPro" id="IPR008991">
    <property type="entry name" value="Translation_prot_SH3-like_sf"/>
</dbReference>
<dbReference type="NCBIfam" id="TIGR01171">
    <property type="entry name" value="rplB_bact"/>
    <property type="match status" value="1"/>
</dbReference>
<dbReference type="PANTHER" id="PTHR13691:SF5">
    <property type="entry name" value="LARGE RIBOSOMAL SUBUNIT PROTEIN UL2M"/>
    <property type="match status" value="1"/>
</dbReference>
<dbReference type="PANTHER" id="PTHR13691">
    <property type="entry name" value="RIBOSOMAL PROTEIN L2"/>
    <property type="match status" value="1"/>
</dbReference>
<dbReference type="Pfam" id="PF00181">
    <property type="entry name" value="Ribosomal_L2"/>
    <property type="match status" value="1"/>
</dbReference>
<dbReference type="Pfam" id="PF03947">
    <property type="entry name" value="Ribosomal_L2_C"/>
    <property type="match status" value="1"/>
</dbReference>
<dbReference type="PIRSF" id="PIRSF002158">
    <property type="entry name" value="Ribosomal_L2"/>
    <property type="match status" value="1"/>
</dbReference>
<dbReference type="SMART" id="SM01383">
    <property type="entry name" value="Ribosomal_L2"/>
    <property type="match status" value="1"/>
</dbReference>
<dbReference type="SMART" id="SM01382">
    <property type="entry name" value="Ribosomal_L2_C"/>
    <property type="match status" value="1"/>
</dbReference>
<dbReference type="SUPFAM" id="SSF50249">
    <property type="entry name" value="Nucleic acid-binding proteins"/>
    <property type="match status" value="1"/>
</dbReference>
<dbReference type="SUPFAM" id="SSF50104">
    <property type="entry name" value="Translation proteins SH3-like domain"/>
    <property type="match status" value="1"/>
</dbReference>
<dbReference type="PROSITE" id="PS00467">
    <property type="entry name" value="RIBOSOMAL_L2"/>
    <property type="match status" value="1"/>
</dbReference>
<gene>
    <name evidence="1" type="primary">rplB</name>
    <name type="ordered locus">BCQ_0126</name>
</gene>
<reference key="1">
    <citation type="journal article" date="2009" name="J. Bacteriol.">
        <title>Complete genome sequence of the extremophilic Bacillus cereus strain Q1 with industrial applications.</title>
        <authorList>
            <person name="Xiong Z."/>
            <person name="Jiang Y."/>
            <person name="Qi D."/>
            <person name="Lu H."/>
            <person name="Yang F."/>
            <person name="Yang J."/>
            <person name="Chen L."/>
            <person name="Sun L."/>
            <person name="Xu X."/>
            <person name="Xue Y."/>
            <person name="Zhu Y."/>
            <person name="Jin Q."/>
        </authorList>
    </citation>
    <scope>NUCLEOTIDE SEQUENCE [LARGE SCALE GENOMIC DNA]</scope>
    <source>
        <strain>Q1</strain>
    </source>
</reference>
<organism>
    <name type="scientific">Bacillus cereus (strain Q1)</name>
    <dbReference type="NCBI Taxonomy" id="361100"/>
    <lineage>
        <taxon>Bacteria</taxon>
        <taxon>Bacillati</taxon>
        <taxon>Bacillota</taxon>
        <taxon>Bacilli</taxon>
        <taxon>Bacillales</taxon>
        <taxon>Bacillaceae</taxon>
        <taxon>Bacillus</taxon>
        <taxon>Bacillus cereus group</taxon>
    </lineage>
</organism>
<accession>B9IZJ7</accession>
<evidence type="ECO:0000255" key="1">
    <source>
        <dbReference type="HAMAP-Rule" id="MF_01320"/>
    </source>
</evidence>
<evidence type="ECO:0000256" key="2">
    <source>
        <dbReference type="SAM" id="MobiDB-lite"/>
    </source>
</evidence>
<evidence type="ECO:0000305" key="3"/>
<proteinExistence type="inferred from homology"/>
<keyword id="KW-0687">Ribonucleoprotein</keyword>
<keyword id="KW-0689">Ribosomal protein</keyword>
<keyword id="KW-0694">RNA-binding</keyword>
<keyword id="KW-0699">rRNA-binding</keyword>
<name>RL2_BACCQ</name>
<protein>
    <recommendedName>
        <fullName evidence="1">Large ribosomal subunit protein uL2</fullName>
    </recommendedName>
    <alternativeName>
        <fullName evidence="3">50S ribosomal protein L2</fullName>
    </alternativeName>
</protein>
<comment type="function">
    <text evidence="1">One of the primary rRNA binding proteins. Required for association of the 30S and 50S subunits to form the 70S ribosome, for tRNA binding and peptide bond formation. It has been suggested to have peptidyltransferase activity; this is somewhat controversial. Makes several contacts with the 16S rRNA in the 70S ribosome.</text>
</comment>
<comment type="subunit">
    <text evidence="1">Part of the 50S ribosomal subunit. Forms a bridge to the 30S subunit in the 70S ribosome.</text>
</comment>
<comment type="similarity">
    <text evidence="1">Belongs to the universal ribosomal protein uL2 family.</text>
</comment>